<gene>
    <name evidence="1" type="primary">adk</name>
    <name type="ordered locus">str1913</name>
</gene>
<proteinExistence type="inferred from homology"/>
<name>KAD_STRT1</name>
<reference key="1">
    <citation type="journal article" date="2004" name="Nat. Biotechnol.">
        <title>Complete sequence and comparative genome analysis of the dairy bacterium Streptococcus thermophilus.</title>
        <authorList>
            <person name="Bolotin A."/>
            <person name="Quinquis B."/>
            <person name="Renault P."/>
            <person name="Sorokin A."/>
            <person name="Ehrlich S.D."/>
            <person name="Kulakauskas S."/>
            <person name="Lapidus A."/>
            <person name="Goltsman E."/>
            <person name="Mazur M."/>
            <person name="Pusch G.D."/>
            <person name="Fonstein M."/>
            <person name="Overbeek R."/>
            <person name="Kyprides N."/>
            <person name="Purnelle B."/>
            <person name="Prozzi D."/>
            <person name="Ngui K."/>
            <person name="Masuy D."/>
            <person name="Hancy F."/>
            <person name="Burteau S."/>
            <person name="Boutry M."/>
            <person name="Delcour J."/>
            <person name="Goffeau A."/>
            <person name="Hols P."/>
        </authorList>
    </citation>
    <scope>NUCLEOTIDE SEQUENCE [LARGE SCALE GENOMIC DNA]</scope>
    <source>
        <strain>CNRZ 1066</strain>
    </source>
</reference>
<sequence>MNLLIMGLPGAGKGTQAAKIVEEFGVAHISTGDMFRAAMANQTEMGRLAKSFIDKGELVPDEVTNGIVKERLAESDIAEKGFLLDGYPRTIEQAHALDETLKALDIKLDGVINIEVNPESLVERLSGRFICRSCGSTYHKVFNPTKVEGTCDVCGGHEFFQREDDKPETVKRRLDVNIAQGEPIIAHYRELGLVSDIQGNQDIDDVFADVKKAIAAIK</sequence>
<accession>Q5LXT2</accession>
<keyword id="KW-0067">ATP-binding</keyword>
<keyword id="KW-0963">Cytoplasm</keyword>
<keyword id="KW-0418">Kinase</keyword>
<keyword id="KW-0479">Metal-binding</keyword>
<keyword id="KW-0545">Nucleotide biosynthesis</keyword>
<keyword id="KW-0547">Nucleotide-binding</keyword>
<keyword id="KW-0808">Transferase</keyword>
<keyword id="KW-0862">Zinc</keyword>
<comment type="function">
    <text evidence="1">Catalyzes the reversible transfer of the terminal phosphate group between ATP and AMP. Plays an important role in cellular energy homeostasis and in adenine nucleotide metabolism.</text>
</comment>
<comment type="catalytic activity">
    <reaction evidence="1">
        <text>AMP + ATP = 2 ADP</text>
        <dbReference type="Rhea" id="RHEA:12973"/>
        <dbReference type="ChEBI" id="CHEBI:30616"/>
        <dbReference type="ChEBI" id="CHEBI:456215"/>
        <dbReference type="ChEBI" id="CHEBI:456216"/>
        <dbReference type="EC" id="2.7.4.3"/>
    </reaction>
</comment>
<comment type="pathway">
    <text evidence="1">Purine metabolism; AMP biosynthesis via salvage pathway; AMP from ADP: step 1/1.</text>
</comment>
<comment type="subunit">
    <text evidence="1">Monomer.</text>
</comment>
<comment type="subcellular location">
    <subcellularLocation>
        <location evidence="1">Cytoplasm</location>
    </subcellularLocation>
</comment>
<comment type="domain">
    <text evidence="1">Consists of three domains, a large central CORE domain and two small peripheral domains, NMPbind and LID, which undergo movements during catalysis. The LID domain closes over the site of phosphoryl transfer upon ATP binding. Assembling and dissambling the active center during each catalytic cycle provides an effective means to prevent ATP hydrolysis. Some bacteria have evolved a zinc-coordinating structure that stabilizes the LID domain.</text>
</comment>
<comment type="similarity">
    <text evidence="1">Belongs to the adenylate kinase family.</text>
</comment>
<dbReference type="EC" id="2.7.4.3" evidence="1"/>
<dbReference type="EMBL" id="CP000024">
    <property type="protein sequence ID" value="AAV63426.1"/>
    <property type="molecule type" value="Genomic_DNA"/>
</dbReference>
<dbReference type="RefSeq" id="WP_002952136.1">
    <property type="nucleotide sequence ID" value="NC_006449.1"/>
</dbReference>
<dbReference type="SMR" id="Q5LXT2"/>
<dbReference type="KEGG" id="stc:str1913"/>
<dbReference type="HOGENOM" id="CLU_032354_1_2_9"/>
<dbReference type="UniPathway" id="UPA00588">
    <property type="reaction ID" value="UER00649"/>
</dbReference>
<dbReference type="GO" id="GO:0005737">
    <property type="term" value="C:cytoplasm"/>
    <property type="evidence" value="ECO:0007669"/>
    <property type="project" value="UniProtKB-SubCell"/>
</dbReference>
<dbReference type="GO" id="GO:0004017">
    <property type="term" value="F:adenylate kinase activity"/>
    <property type="evidence" value="ECO:0007669"/>
    <property type="project" value="UniProtKB-UniRule"/>
</dbReference>
<dbReference type="GO" id="GO:0005524">
    <property type="term" value="F:ATP binding"/>
    <property type="evidence" value="ECO:0007669"/>
    <property type="project" value="UniProtKB-UniRule"/>
</dbReference>
<dbReference type="GO" id="GO:0008270">
    <property type="term" value="F:zinc ion binding"/>
    <property type="evidence" value="ECO:0007669"/>
    <property type="project" value="UniProtKB-UniRule"/>
</dbReference>
<dbReference type="GO" id="GO:0044209">
    <property type="term" value="P:AMP salvage"/>
    <property type="evidence" value="ECO:0007669"/>
    <property type="project" value="UniProtKB-UniRule"/>
</dbReference>
<dbReference type="CDD" id="cd01428">
    <property type="entry name" value="ADK"/>
    <property type="match status" value="1"/>
</dbReference>
<dbReference type="FunFam" id="3.40.50.300:FF:000106">
    <property type="entry name" value="Adenylate kinase mitochondrial"/>
    <property type="match status" value="1"/>
</dbReference>
<dbReference type="Gene3D" id="3.40.50.300">
    <property type="entry name" value="P-loop containing nucleotide triphosphate hydrolases"/>
    <property type="match status" value="1"/>
</dbReference>
<dbReference type="HAMAP" id="MF_00235">
    <property type="entry name" value="Adenylate_kinase_Adk"/>
    <property type="match status" value="1"/>
</dbReference>
<dbReference type="InterPro" id="IPR006259">
    <property type="entry name" value="Adenyl_kin_sub"/>
</dbReference>
<dbReference type="InterPro" id="IPR000850">
    <property type="entry name" value="Adenylat/UMP-CMP_kin"/>
</dbReference>
<dbReference type="InterPro" id="IPR033690">
    <property type="entry name" value="Adenylat_kinase_CS"/>
</dbReference>
<dbReference type="InterPro" id="IPR007862">
    <property type="entry name" value="Adenylate_kinase_lid-dom"/>
</dbReference>
<dbReference type="InterPro" id="IPR027417">
    <property type="entry name" value="P-loop_NTPase"/>
</dbReference>
<dbReference type="NCBIfam" id="TIGR01351">
    <property type="entry name" value="adk"/>
    <property type="match status" value="1"/>
</dbReference>
<dbReference type="NCBIfam" id="NF001380">
    <property type="entry name" value="PRK00279.1-2"/>
    <property type="match status" value="1"/>
</dbReference>
<dbReference type="NCBIfam" id="NF001381">
    <property type="entry name" value="PRK00279.1-3"/>
    <property type="match status" value="1"/>
</dbReference>
<dbReference type="NCBIfam" id="NF001382">
    <property type="entry name" value="PRK00279.1-4"/>
    <property type="match status" value="1"/>
</dbReference>
<dbReference type="PANTHER" id="PTHR23359">
    <property type="entry name" value="NUCLEOTIDE KINASE"/>
    <property type="match status" value="1"/>
</dbReference>
<dbReference type="Pfam" id="PF00406">
    <property type="entry name" value="ADK"/>
    <property type="match status" value="1"/>
</dbReference>
<dbReference type="Pfam" id="PF05191">
    <property type="entry name" value="ADK_lid"/>
    <property type="match status" value="1"/>
</dbReference>
<dbReference type="PRINTS" id="PR00094">
    <property type="entry name" value="ADENYLTKNASE"/>
</dbReference>
<dbReference type="SUPFAM" id="SSF52540">
    <property type="entry name" value="P-loop containing nucleoside triphosphate hydrolases"/>
    <property type="match status" value="1"/>
</dbReference>
<dbReference type="PROSITE" id="PS00113">
    <property type="entry name" value="ADENYLATE_KINASE"/>
    <property type="match status" value="1"/>
</dbReference>
<feature type="chain" id="PRO_1000021773" description="Adenylate kinase">
    <location>
        <begin position="1"/>
        <end position="218"/>
    </location>
</feature>
<feature type="region of interest" description="NMP" evidence="1">
    <location>
        <begin position="30"/>
        <end position="59"/>
    </location>
</feature>
<feature type="region of interest" description="LID" evidence="1">
    <location>
        <begin position="127"/>
        <end position="165"/>
    </location>
</feature>
<feature type="binding site" evidence="1">
    <location>
        <begin position="10"/>
        <end position="15"/>
    </location>
    <ligand>
        <name>ATP</name>
        <dbReference type="ChEBI" id="CHEBI:30616"/>
    </ligand>
</feature>
<feature type="binding site" evidence="1">
    <location>
        <position position="31"/>
    </location>
    <ligand>
        <name>AMP</name>
        <dbReference type="ChEBI" id="CHEBI:456215"/>
    </ligand>
</feature>
<feature type="binding site" evidence="1">
    <location>
        <position position="36"/>
    </location>
    <ligand>
        <name>AMP</name>
        <dbReference type="ChEBI" id="CHEBI:456215"/>
    </ligand>
</feature>
<feature type="binding site" evidence="1">
    <location>
        <begin position="57"/>
        <end position="59"/>
    </location>
    <ligand>
        <name>AMP</name>
        <dbReference type="ChEBI" id="CHEBI:456215"/>
    </ligand>
</feature>
<feature type="binding site" evidence="1">
    <location>
        <begin position="86"/>
        <end position="89"/>
    </location>
    <ligand>
        <name>AMP</name>
        <dbReference type="ChEBI" id="CHEBI:456215"/>
    </ligand>
</feature>
<feature type="binding site" evidence="1">
    <location>
        <position position="93"/>
    </location>
    <ligand>
        <name>AMP</name>
        <dbReference type="ChEBI" id="CHEBI:456215"/>
    </ligand>
</feature>
<feature type="binding site" evidence="1">
    <location>
        <position position="128"/>
    </location>
    <ligand>
        <name>ATP</name>
        <dbReference type="ChEBI" id="CHEBI:30616"/>
    </ligand>
</feature>
<feature type="binding site" evidence="1">
    <location>
        <position position="131"/>
    </location>
    <ligand>
        <name>Zn(2+)</name>
        <dbReference type="ChEBI" id="CHEBI:29105"/>
        <note>structural</note>
    </ligand>
</feature>
<feature type="binding site" evidence="1">
    <location>
        <position position="134"/>
    </location>
    <ligand>
        <name>Zn(2+)</name>
        <dbReference type="ChEBI" id="CHEBI:29105"/>
        <note>structural</note>
    </ligand>
</feature>
<feature type="binding site" evidence="1">
    <location>
        <begin position="137"/>
        <end position="138"/>
    </location>
    <ligand>
        <name>ATP</name>
        <dbReference type="ChEBI" id="CHEBI:30616"/>
    </ligand>
</feature>
<feature type="binding site" evidence="1">
    <location>
        <position position="151"/>
    </location>
    <ligand>
        <name>Zn(2+)</name>
        <dbReference type="ChEBI" id="CHEBI:29105"/>
        <note>structural</note>
    </ligand>
</feature>
<feature type="binding site" evidence="1">
    <location>
        <position position="154"/>
    </location>
    <ligand>
        <name>Zn(2+)</name>
        <dbReference type="ChEBI" id="CHEBI:29105"/>
        <note>structural</note>
    </ligand>
</feature>
<feature type="binding site" evidence="1">
    <location>
        <position position="162"/>
    </location>
    <ligand>
        <name>AMP</name>
        <dbReference type="ChEBI" id="CHEBI:456215"/>
    </ligand>
</feature>
<feature type="binding site" evidence="1">
    <location>
        <position position="173"/>
    </location>
    <ligand>
        <name>AMP</name>
        <dbReference type="ChEBI" id="CHEBI:456215"/>
    </ligand>
</feature>
<feature type="binding site" evidence="1">
    <location>
        <position position="201"/>
    </location>
    <ligand>
        <name>ATP</name>
        <dbReference type="ChEBI" id="CHEBI:30616"/>
    </ligand>
</feature>
<protein>
    <recommendedName>
        <fullName evidence="1">Adenylate kinase</fullName>
        <shortName evidence="1">AK</shortName>
        <ecNumber evidence="1">2.7.4.3</ecNumber>
    </recommendedName>
    <alternativeName>
        <fullName evidence="1">ATP-AMP transphosphorylase</fullName>
    </alternativeName>
    <alternativeName>
        <fullName evidence="1">ATP:AMP phosphotransferase</fullName>
    </alternativeName>
    <alternativeName>
        <fullName evidence="1">Adenylate monophosphate kinase</fullName>
    </alternativeName>
</protein>
<evidence type="ECO:0000255" key="1">
    <source>
        <dbReference type="HAMAP-Rule" id="MF_00235"/>
    </source>
</evidence>
<organism>
    <name type="scientific">Streptococcus thermophilus (strain CNRZ 1066)</name>
    <dbReference type="NCBI Taxonomy" id="299768"/>
    <lineage>
        <taxon>Bacteria</taxon>
        <taxon>Bacillati</taxon>
        <taxon>Bacillota</taxon>
        <taxon>Bacilli</taxon>
        <taxon>Lactobacillales</taxon>
        <taxon>Streptococcaceae</taxon>
        <taxon>Streptococcus</taxon>
    </lineage>
</organism>